<reference key="1">
    <citation type="submission" date="1999-12" db="EMBL/GenBank/DDBJ databases">
        <title>Presence of proton-translocating pyrophosphatase genes in root nodule-making bacteria (Rhizobia) and pathogenic tumour-making bacteria (Agrobacterium).</title>
        <authorList>
            <person name="Perez-Castineira J.R."/>
            <person name="Losada M."/>
            <person name="Serrano A."/>
        </authorList>
    </citation>
    <scope>NUCLEOTIDE SEQUENCE [GENOMIC DNA]</scope>
    <source>
        <strain>D44</strain>
    </source>
</reference>
<proteinExistence type="inferred from homology"/>
<keyword id="KW-0997">Cell inner membrane</keyword>
<keyword id="KW-1003">Cell membrane</keyword>
<keyword id="KW-0406">Ion transport</keyword>
<keyword id="KW-0460">Magnesium</keyword>
<keyword id="KW-0472">Membrane</keyword>
<keyword id="KW-0630">Potassium</keyword>
<keyword id="KW-0915">Sodium</keyword>
<keyword id="KW-0739">Sodium transport</keyword>
<keyword id="KW-1278">Translocase</keyword>
<keyword id="KW-0812">Transmembrane</keyword>
<keyword id="KW-1133">Transmembrane helix</keyword>
<keyword id="KW-0813">Transport</keyword>
<name>HPPA_RHIRD</name>
<organism>
    <name type="scientific">Rhizobium radiobacter</name>
    <name type="common">Agrobacterium tumefaciens</name>
    <name type="synonym">Agrobacterium radiobacter</name>
    <dbReference type="NCBI Taxonomy" id="358"/>
    <lineage>
        <taxon>Bacteria</taxon>
        <taxon>Pseudomonadati</taxon>
        <taxon>Pseudomonadota</taxon>
        <taxon>Alphaproteobacteria</taxon>
        <taxon>Hyphomicrobiales</taxon>
        <taxon>Rhizobiaceae</taxon>
        <taxon>Rhizobium/Agrobacterium group</taxon>
        <taxon>Agrobacterium</taxon>
        <taxon>Agrobacterium tumefaciens complex</taxon>
    </lineage>
</organism>
<protein>
    <recommendedName>
        <fullName>Putative K(+)-stimulated pyrophosphate-energized sodium pump</fullName>
        <ecNumber>7.2.3.1</ecNumber>
    </recommendedName>
    <alternativeName>
        <fullName>Membrane-bound sodium-translocating pyrophosphatase</fullName>
    </alternativeName>
    <alternativeName>
        <fullName>Pyrophosphate-energized inorganic pyrophosphatase</fullName>
        <shortName>Na(+)-PPase</shortName>
    </alternativeName>
</protein>
<evidence type="ECO:0000250" key="1"/>
<evidence type="ECO:0000255" key="2"/>
<evidence type="ECO:0000305" key="3"/>
<comment type="function">
    <text evidence="1">Sodium pump that utilizes the energy of pyrophosphate hydrolysis as the driving force for Na(+) movement across the membrane.</text>
</comment>
<comment type="catalytic activity">
    <reaction>
        <text>Na(+)(in) + diphosphate + H2O = Na(+)(out) + 2 phosphate + H(+)</text>
        <dbReference type="Rhea" id="RHEA:57884"/>
        <dbReference type="ChEBI" id="CHEBI:15377"/>
        <dbReference type="ChEBI" id="CHEBI:15378"/>
        <dbReference type="ChEBI" id="CHEBI:29101"/>
        <dbReference type="ChEBI" id="CHEBI:33019"/>
        <dbReference type="ChEBI" id="CHEBI:43474"/>
        <dbReference type="EC" id="7.2.3.1"/>
    </reaction>
</comment>
<comment type="cofactor">
    <cofactor evidence="1">
        <name>Mg(2+)</name>
        <dbReference type="ChEBI" id="CHEBI:18420"/>
    </cofactor>
</comment>
<comment type="activity regulation">
    <text evidence="1">Requires K(+) for maximal activity.</text>
</comment>
<comment type="subunit">
    <text evidence="1">Homodimer.</text>
</comment>
<comment type="subcellular location">
    <subcellularLocation>
        <location evidence="1">Cell inner membrane</location>
        <topology evidence="1">Multi-pass membrane protein</topology>
    </subcellularLocation>
</comment>
<comment type="similarity">
    <text evidence="3">Belongs to the H(+)-translocating pyrophosphatase (TC 3.A.10) family. K(+)-stimulated subfamily.</text>
</comment>
<sequence>AGGIAEMAELGPEVRKTTDKLDSVGNTTAAIAKGFAIGSAALTALALFTAFAEEIAKNPKLTGLLVDGHLVVNLTEPGVIIGIFLGATLPFLVCAFTMEAVGKAAFEMIEEVRRQFREIPGIMEGTGRPDYAKCVDISTKAAIREMMLPGVFAVGAPLIVGFLLGAKALAGFLAGVTASGVLLAIFSPS</sequence>
<gene>
    <name type="primary">hppA</name>
    <name type="synonym">vppA</name>
</gene>
<accession>Q8VPZ0</accession>
<feature type="chain" id="PRO_0000217008" description="Putative K(+)-stimulated pyrophosphate-energized sodium pump">
    <location>
        <begin position="1" status="less than"/>
        <end position="189" status="greater than"/>
    </location>
</feature>
<feature type="transmembrane region" description="Helical" evidence="2">
    <location>
        <begin position="31"/>
        <end position="51"/>
    </location>
</feature>
<feature type="transmembrane region" description="Helical" evidence="2">
    <location>
        <begin position="78"/>
        <end position="98"/>
    </location>
</feature>
<feature type="transmembrane region" description="Helical" evidence="2">
    <location>
        <begin position="146"/>
        <end position="166"/>
    </location>
</feature>
<feature type="transmembrane region" description="Helical" evidence="2">
    <location>
        <begin position="168"/>
        <end position="188"/>
    </location>
</feature>
<feature type="site" description="Determinant of potassium dependence" evidence="1">
    <location>
        <position position="29"/>
    </location>
</feature>
<feature type="non-terminal residue">
    <location>
        <position position="1"/>
    </location>
</feature>
<feature type="non-terminal residue">
    <location>
        <position position="189"/>
    </location>
</feature>
<dbReference type="EC" id="7.2.3.1"/>
<dbReference type="EMBL" id="AJ251785">
    <property type="protein sequence ID" value="CAC80979.1"/>
    <property type="molecule type" value="Genomic_DNA"/>
</dbReference>
<dbReference type="SMR" id="Q8VPZ0"/>
<dbReference type="GO" id="GO:0005886">
    <property type="term" value="C:plasma membrane"/>
    <property type="evidence" value="ECO:0007669"/>
    <property type="project" value="UniProtKB-SubCell"/>
</dbReference>
<dbReference type="GO" id="GO:0009678">
    <property type="term" value="F:diphosphate hydrolysis-driven proton transmembrane transporter activity"/>
    <property type="evidence" value="ECO:0007669"/>
    <property type="project" value="InterPro"/>
</dbReference>
<dbReference type="GO" id="GO:0004427">
    <property type="term" value="F:inorganic diphosphate phosphatase activity"/>
    <property type="evidence" value="ECO:0007669"/>
    <property type="project" value="InterPro"/>
</dbReference>
<dbReference type="GO" id="GO:0006814">
    <property type="term" value="P:sodium ion transport"/>
    <property type="evidence" value="ECO:0007669"/>
    <property type="project" value="UniProtKB-KW"/>
</dbReference>
<dbReference type="InterPro" id="IPR004131">
    <property type="entry name" value="PPase-energised_H-pump"/>
</dbReference>
<dbReference type="PANTHER" id="PTHR31998">
    <property type="entry name" value="K(+)-INSENSITIVE PYROPHOSPHATE-ENERGIZED PROTON PUMP"/>
    <property type="match status" value="1"/>
</dbReference>
<dbReference type="Pfam" id="PF03030">
    <property type="entry name" value="H_PPase"/>
    <property type="match status" value="1"/>
</dbReference>